<comment type="function">
    <text evidence="1">Part of the ABC transporter complex BtuCDF involved in vitamin B12 import. Responsible for energy coupling to the transport system.</text>
</comment>
<comment type="catalytic activity">
    <reaction evidence="1">
        <text>an R-cob(III)alamin(out) + ATP + H2O = an R-cob(III)alamin(in) + ADP + phosphate + H(+)</text>
        <dbReference type="Rhea" id="RHEA:17873"/>
        <dbReference type="ChEBI" id="CHEBI:15377"/>
        <dbReference type="ChEBI" id="CHEBI:15378"/>
        <dbReference type="ChEBI" id="CHEBI:30616"/>
        <dbReference type="ChEBI" id="CHEBI:43474"/>
        <dbReference type="ChEBI" id="CHEBI:140785"/>
        <dbReference type="ChEBI" id="CHEBI:456216"/>
        <dbReference type="EC" id="7.6.2.8"/>
    </reaction>
</comment>
<comment type="subunit">
    <text evidence="1">The complex is composed of two ATP-binding proteins (BtuD), two transmembrane proteins (BtuC) and a solute-binding protein (BtuF).</text>
</comment>
<comment type="subcellular location">
    <subcellularLocation>
        <location evidence="1">Cell inner membrane</location>
        <topology evidence="1">Peripheral membrane protein</topology>
    </subcellularLocation>
</comment>
<comment type="similarity">
    <text evidence="1">Belongs to the ABC transporter superfamily. Vitamin B12 importer (TC 3.A.1.13.1) family.</text>
</comment>
<accession>B7NTS2</accession>
<sequence>MSIVMQLQDVAESTRLGPLSGEVRAGEILHLVGPNGAGKSTLLARMAGMTSGKGSIQFAGQPLEAWSATKLALHRAYLSQQQTPPFAMPVWHYLTLHQHDKTRTELLNDVAGALALDDKLGRSTNQLSGGEWQRVRLAAVVLQITPQANPAGQLLLLDEPMNSLDVAQQSALDKILSALCQQGLAIVMSSHDLNHTLRHAHRAWLLKGGKMLASGRREEVLTPPNLAQAYGMNFRRLDIEGHRMLISTI</sequence>
<proteinExistence type="inferred from homology"/>
<name>BTUD_ECO7I</name>
<dbReference type="EC" id="7.6.2.8" evidence="1"/>
<dbReference type="EMBL" id="CU928164">
    <property type="protein sequence ID" value="CAR17478.1"/>
    <property type="molecule type" value="Genomic_DNA"/>
</dbReference>
<dbReference type="RefSeq" id="WP_000029466.1">
    <property type="nucleotide sequence ID" value="NC_011750.1"/>
</dbReference>
<dbReference type="RefSeq" id="YP_002407352.1">
    <property type="nucleotide sequence ID" value="NC_011750.1"/>
</dbReference>
<dbReference type="SMR" id="B7NTS2"/>
<dbReference type="STRING" id="585057.ECIAI39_1344"/>
<dbReference type="GeneID" id="93775873"/>
<dbReference type="KEGG" id="ect:ECIAI39_1344"/>
<dbReference type="PATRIC" id="fig|585057.6.peg.1406"/>
<dbReference type="HOGENOM" id="CLU_000604_1_11_6"/>
<dbReference type="Proteomes" id="UP000000749">
    <property type="component" value="Chromosome"/>
</dbReference>
<dbReference type="GO" id="GO:0005886">
    <property type="term" value="C:plasma membrane"/>
    <property type="evidence" value="ECO:0007669"/>
    <property type="project" value="UniProtKB-SubCell"/>
</dbReference>
<dbReference type="GO" id="GO:0015420">
    <property type="term" value="F:ABC-type vitamin B12 transporter activity"/>
    <property type="evidence" value="ECO:0007669"/>
    <property type="project" value="UniProtKB-UniRule"/>
</dbReference>
<dbReference type="GO" id="GO:0005524">
    <property type="term" value="F:ATP binding"/>
    <property type="evidence" value="ECO:0007669"/>
    <property type="project" value="UniProtKB-KW"/>
</dbReference>
<dbReference type="GO" id="GO:0016887">
    <property type="term" value="F:ATP hydrolysis activity"/>
    <property type="evidence" value="ECO:0007669"/>
    <property type="project" value="InterPro"/>
</dbReference>
<dbReference type="CDD" id="cd03214">
    <property type="entry name" value="ABC_Iron-Siderophores_B12_Hemin"/>
    <property type="match status" value="1"/>
</dbReference>
<dbReference type="FunFam" id="3.40.50.300:FF:000462">
    <property type="entry name" value="Vitamin B12 import ATP-binding protein BtuD"/>
    <property type="match status" value="1"/>
</dbReference>
<dbReference type="Gene3D" id="3.40.50.300">
    <property type="entry name" value="P-loop containing nucleotide triphosphate hydrolases"/>
    <property type="match status" value="1"/>
</dbReference>
<dbReference type="HAMAP" id="MF_01005">
    <property type="entry name" value="BtuD"/>
    <property type="match status" value="1"/>
</dbReference>
<dbReference type="InterPro" id="IPR003593">
    <property type="entry name" value="AAA+_ATPase"/>
</dbReference>
<dbReference type="InterPro" id="IPR003439">
    <property type="entry name" value="ABC_transporter-like_ATP-bd"/>
</dbReference>
<dbReference type="InterPro" id="IPR017871">
    <property type="entry name" value="ABC_transporter-like_CS"/>
</dbReference>
<dbReference type="InterPro" id="IPR023693">
    <property type="entry name" value="ABC_transptr_BtuD"/>
</dbReference>
<dbReference type="InterPro" id="IPR050153">
    <property type="entry name" value="Metal_Ion_Import_ABC"/>
</dbReference>
<dbReference type="InterPro" id="IPR027417">
    <property type="entry name" value="P-loop_NTPase"/>
</dbReference>
<dbReference type="NCBIfam" id="NF002981">
    <property type="entry name" value="PRK03695.1"/>
    <property type="match status" value="1"/>
</dbReference>
<dbReference type="PANTHER" id="PTHR42734">
    <property type="entry name" value="METAL TRANSPORT SYSTEM ATP-BINDING PROTEIN TM_0124-RELATED"/>
    <property type="match status" value="1"/>
</dbReference>
<dbReference type="PANTHER" id="PTHR42734:SF18">
    <property type="entry name" value="VITAMIN B12 IMPORT ATP-BINDING PROTEIN BTUD"/>
    <property type="match status" value="1"/>
</dbReference>
<dbReference type="Pfam" id="PF00005">
    <property type="entry name" value="ABC_tran"/>
    <property type="match status" value="1"/>
</dbReference>
<dbReference type="SMART" id="SM00382">
    <property type="entry name" value="AAA"/>
    <property type="match status" value="1"/>
</dbReference>
<dbReference type="SUPFAM" id="SSF52540">
    <property type="entry name" value="P-loop containing nucleoside triphosphate hydrolases"/>
    <property type="match status" value="1"/>
</dbReference>
<dbReference type="PROSITE" id="PS00211">
    <property type="entry name" value="ABC_TRANSPORTER_1"/>
    <property type="match status" value="1"/>
</dbReference>
<dbReference type="PROSITE" id="PS50893">
    <property type="entry name" value="ABC_TRANSPORTER_2"/>
    <property type="match status" value="1"/>
</dbReference>
<reference key="1">
    <citation type="journal article" date="2009" name="PLoS Genet.">
        <title>Organised genome dynamics in the Escherichia coli species results in highly diverse adaptive paths.</title>
        <authorList>
            <person name="Touchon M."/>
            <person name="Hoede C."/>
            <person name="Tenaillon O."/>
            <person name="Barbe V."/>
            <person name="Baeriswyl S."/>
            <person name="Bidet P."/>
            <person name="Bingen E."/>
            <person name="Bonacorsi S."/>
            <person name="Bouchier C."/>
            <person name="Bouvet O."/>
            <person name="Calteau A."/>
            <person name="Chiapello H."/>
            <person name="Clermont O."/>
            <person name="Cruveiller S."/>
            <person name="Danchin A."/>
            <person name="Diard M."/>
            <person name="Dossat C."/>
            <person name="Karoui M.E."/>
            <person name="Frapy E."/>
            <person name="Garry L."/>
            <person name="Ghigo J.M."/>
            <person name="Gilles A.M."/>
            <person name="Johnson J."/>
            <person name="Le Bouguenec C."/>
            <person name="Lescat M."/>
            <person name="Mangenot S."/>
            <person name="Martinez-Jehanne V."/>
            <person name="Matic I."/>
            <person name="Nassif X."/>
            <person name="Oztas S."/>
            <person name="Petit M.A."/>
            <person name="Pichon C."/>
            <person name="Rouy Z."/>
            <person name="Ruf C.S."/>
            <person name="Schneider D."/>
            <person name="Tourret J."/>
            <person name="Vacherie B."/>
            <person name="Vallenet D."/>
            <person name="Medigue C."/>
            <person name="Rocha E.P.C."/>
            <person name="Denamur E."/>
        </authorList>
    </citation>
    <scope>NUCLEOTIDE SEQUENCE [LARGE SCALE GENOMIC DNA]</scope>
    <source>
        <strain>IAI39 / ExPEC</strain>
    </source>
</reference>
<gene>
    <name evidence="1" type="primary">btuD</name>
    <name type="ordered locus">ECIAI39_1344</name>
</gene>
<organism>
    <name type="scientific">Escherichia coli O7:K1 (strain IAI39 / ExPEC)</name>
    <dbReference type="NCBI Taxonomy" id="585057"/>
    <lineage>
        <taxon>Bacteria</taxon>
        <taxon>Pseudomonadati</taxon>
        <taxon>Pseudomonadota</taxon>
        <taxon>Gammaproteobacteria</taxon>
        <taxon>Enterobacterales</taxon>
        <taxon>Enterobacteriaceae</taxon>
        <taxon>Escherichia</taxon>
    </lineage>
</organism>
<protein>
    <recommendedName>
        <fullName evidence="1">Vitamin B12 import ATP-binding protein BtuD</fullName>
        <ecNumber evidence="1">7.6.2.8</ecNumber>
    </recommendedName>
    <alternativeName>
        <fullName evidence="1">Vitamin B12-transporting ATPase</fullName>
    </alternativeName>
</protein>
<evidence type="ECO:0000255" key="1">
    <source>
        <dbReference type="HAMAP-Rule" id="MF_01005"/>
    </source>
</evidence>
<feature type="chain" id="PRO_1000134660" description="Vitamin B12 import ATP-binding protein BtuD">
    <location>
        <begin position="1"/>
        <end position="249"/>
    </location>
</feature>
<feature type="domain" description="ABC transporter" evidence="1">
    <location>
        <begin position="1"/>
        <end position="233"/>
    </location>
</feature>
<feature type="binding site" evidence="1">
    <location>
        <begin position="33"/>
        <end position="40"/>
    </location>
    <ligand>
        <name>ATP</name>
        <dbReference type="ChEBI" id="CHEBI:30616"/>
    </ligand>
</feature>
<keyword id="KW-0067">ATP-binding</keyword>
<keyword id="KW-0997">Cell inner membrane</keyword>
<keyword id="KW-1003">Cell membrane</keyword>
<keyword id="KW-0472">Membrane</keyword>
<keyword id="KW-0547">Nucleotide-binding</keyword>
<keyword id="KW-1278">Translocase</keyword>
<keyword id="KW-0813">Transport</keyword>